<comment type="function">
    <text evidence="1">Bifunctional serine/threonine kinase and phosphorylase involved in the regulation of the phosphoenolpyruvate synthase (PEPS) by catalyzing its phosphorylation/dephosphorylation.</text>
</comment>
<comment type="catalytic activity">
    <reaction evidence="1">
        <text>[pyruvate, water dikinase] + ADP = [pyruvate, water dikinase]-phosphate + AMP + H(+)</text>
        <dbReference type="Rhea" id="RHEA:46020"/>
        <dbReference type="Rhea" id="RHEA-COMP:11425"/>
        <dbReference type="Rhea" id="RHEA-COMP:11426"/>
        <dbReference type="ChEBI" id="CHEBI:15378"/>
        <dbReference type="ChEBI" id="CHEBI:43176"/>
        <dbReference type="ChEBI" id="CHEBI:68546"/>
        <dbReference type="ChEBI" id="CHEBI:456215"/>
        <dbReference type="ChEBI" id="CHEBI:456216"/>
        <dbReference type="EC" id="2.7.11.33"/>
    </reaction>
</comment>
<comment type="catalytic activity">
    <reaction evidence="1">
        <text>[pyruvate, water dikinase]-phosphate + phosphate + H(+) = [pyruvate, water dikinase] + diphosphate</text>
        <dbReference type="Rhea" id="RHEA:48580"/>
        <dbReference type="Rhea" id="RHEA-COMP:11425"/>
        <dbReference type="Rhea" id="RHEA-COMP:11426"/>
        <dbReference type="ChEBI" id="CHEBI:15378"/>
        <dbReference type="ChEBI" id="CHEBI:33019"/>
        <dbReference type="ChEBI" id="CHEBI:43176"/>
        <dbReference type="ChEBI" id="CHEBI:43474"/>
        <dbReference type="ChEBI" id="CHEBI:68546"/>
        <dbReference type="EC" id="2.7.4.28"/>
    </reaction>
</comment>
<comment type="similarity">
    <text evidence="1">Belongs to the pyruvate, phosphate/water dikinase regulatory protein family. PSRP subfamily.</text>
</comment>
<gene>
    <name type="ordered locus">Shew_1548</name>
</gene>
<keyword id="KW-0418">Kinase</keyword>
<keyword id="KW-0547">Nucleotide-binding</keyword>
<keyword id="KW-1185">Reference proteome</keyword>
<keyword id="KW-0723">Serine/threonine-protein kinase</keyword>
<keyword id="KW-0808">Transferase</keyword>
<reference key="1">
    <citation type="submission" date="2007-03" db="EMBL/GenBank/DDBJ databases">
        <title>Complete sequence of Shewanella loihica PV-4.</title>
        <authorList>
            <consortium name="US DOE Joint Genome Institute"/>
            <person name="Copeland A."/>
            <person name="Lucas S."/>
            <person name="Lapidus A."/>
            <person name="Barry K."/>
            <person name="Detter J.C."/>
            <person name="Glavina del Rio T."/>
            <person name="Hammon N."/>
            <person name="Israni S."/>
            <person name="Dalin E."/>
            <person name="Tice H."/>
            <person name="Pitluck S."/>
            <person name="Chain P."/>
            <person name="Malfatti S."/>
            <person name="Shin M."/>
            <person name="Vergez L."/>
            <person name="Schmutz J."/>
            <person name="Larimer F."/>
            <person name="Land M."/>
            <person name="Hauser L."/>
            <person name="Kyrpides N."/>
            <person name="Mikhailova N."/>
            <person name="Romine M.F."/>
            <person name="Serres G."/>
            <person name="Fredrickson J."/>
            <person name="Tiedje J."/>
            <person name="Richardson P."/>
        </authorList>
    </citation>
    <scope>NUCLEOTIDE SEQUENCE [LARGE SCALE GENOMIC DNA]</scope>
    <source>
        <strain>ATCC BAA-1088 / PV-4</strain>
    </source>
</reference>
<name>PSRP_SHELP</name>
<sequence>MSRKVFYISDGTAITAEVFGHAVLSQFPVEFEALTIPFVETTQKAEAVKAQINDCFITTGERPLVFHSIVKAEIRDIIYSSECIDYDFLNTFVAPLEDQLGVKAVPVTHRTHGKANHSYEARIDAINYAMENDDGQTLKHIDKADIVLLGVSRCGKTPSSLYLSMQFGIKAANYPFIEDDMDNLKLPEVLKKNKHKLFGLTIDPVRLHEIRQSRMENSRYSSLRQCRIEVKEVEMMYKRERIPFVNTTNHSVEEIATKILDVTGLERHMF</sequence>
<dbReference type="EC" id="2.7.11.33" evidence="1"/>
<dbReference type="EC" id="2.7.4.28" evidence="1"/>
<dbReference type="EMBL" id="CP000606">
    <property type="protein sequence ID" value="ABO23415.1"/>
    <property type="molecule type" value="Genomic_DNA"/>
</dbReference>
<dbReference type="RefSeq" id="WP_011865347.1">
    <property type="nucleotide sequence ID" value="NC_009092.1"/>
</dbReference>
<dbReference type="SMR" id="A3QD67"/>
<dbReference type="STRING" id="323850.Shew_1548"/>
<dbReference type="KEGG" id="slo:Shew_1548"/>
<dbReference type="eggNOG" id="COG1806">
    <property type="taxonomic scope" value="Bacteria"/>
</dbReference>
<dbReference type="HOGENOM" id="CLU_046206_1_0_6"/>
<dbReference type="OrthoDB" id="9782201at2"/>
<dbReference type="Proteomes" id="UP000001558">
    <property type="component" value="Chromosome"/>
</dbReference>
<dbReference type="GO" id="GO:0043531">
    <property type="term" value="F:ADP binding"/>
    <property type="evidence" value="ECO:0007669"/>
    <property type="project" value="UniProtKB-UniRule"/>
</dbReference>
<dbReference type="GO" id="GO:0005524">
    <property type="term" value="F:ATP binding"/>
    <property type="evidence" value="ECO:0007669"/>
    <property type="project" value="InterPro"/>
</dbReference>
<dbReference type="GO" id="GO:0016776">
    <property type="term" value="F:phosphotransferase activity, phosphate group as acceptor"/>
    <property type="evidence" value="ECO:0007669"/>
    <property type="project" value="UniProtKB-UniRule"/>
</dbReference>
<dbReference type="GO" id="GO:0004674">
    <property type="term" value="F:protein serine/threonine kinase activity"/>
    <property type="evidence" value="ECO:0007669"/>
    <property type="project" value="UniProtKB-UniRule"/>
</dbReference>
<dbReference type="HAMAP" id="MF_01062">
    <property type="entry name" value="PSRP"/>
    <property type="match status" value="1"/>
</dbReference>
<dbReference type="InterPro" id="IPR005177">
    <property type="entry name" value="Kinase-pyrophosphorylase"/>
</dbReference>
<dbReference type="InterPro" id="IPR026530">
    <property type="entry name" value="PSRP"/>
</dbReference>
<dbReference type="NCBIfam" id="NF003742">
    <property type="entry name" value="PRK05339.1"/>
    <property type="match status" value="1"/>
</dbReference>
<dbReference type="PANTHER" id="PTHR31756">
    <property type="entry name" value="PYRUVATE, PHOSPHATE DIKINASE REGULATORY PROTEIN 1, CHLOROPLASTIC"/>
    <property type="match status" value="1"/>
</dbReference>
<dbReference type="PANTHER" id="PTHR31756:SF3">
    <property type="entry name" value="PYRUVATE, PHOSPHATE DIKINASE REGULATORY PROTEIN 1, CHLOROPLASTIC"/>
    <property type="match status" value="1"/>
</dbReference>
<dbReference type="Pfam" id="PF03618">
    <property type="entry name" value="Kinase-PPPase"/>
    <property type="match status" value="1"/>
</dbReference>
<proteinExistence type="inferred from homology"/>
<feature type="chain" id="PRO_0000316736" description="Putative phosphoenolpyruvate synthase regulatory protein">
    <location>
        <begin position="1"/>
        <end position="270"/>
    </location>
</feature>
<feature type="binding site" evidence="1">
    <location>
        <begin position="150"/>
        <end position="157"/>
    </location>
    <ligand>
        <name>ADP</name>
        <dbReference type="ChEBI" id="CHEBI:456216"/>
    </ligand>
</feature>
<organism>
    <name type="scientific">Shewanella loihica (strain ATCC BAA-1088 / PV-4)</name>
    <dbReference type="NCBI Taxonomy" id="323850"/>
    <lineage>
        <taxon>Bacteria</taxon>
        <taxon>Pseudomonadati</taxon>
        <taxon>Pseudomonadota</taxon>
        <taxon>Gammaproteobacteria</taxon>
        <taxon>Alteromonadales</taxon>
        <taxon>Shewanellaceae</taxon>
        <taxon>Shewanella</taxon>
    </lineage>
</organism>
<accession>A3QD67</accession>
<protein>
    <recommendedName>
        <fullName evidence="1">Putative phosphoenolpyruvate synthase regulatory protein</fullName>
        <shortName evidence="1">PEP synthase regulatory protein</shortName>
        <shortName evidence="1">PSRP</shortName>
        <ecNumber evidence="1">2.7.11.33</ecNumber>
        <ecNumber evidence="1">2.7.4.28</ecNumber>
    </recommendedName>
    <alternativeName>
        <fullName evidence="1">Pyruvate, water dikinase regulatory protein</fullName>
    </alternativeName>
</protein>
<evidence type="ECO:0000255" key="1">
    <source>
        <dbReference type="HAMAP-Rule" id="MF_01062"/>
    </source>
</evidence>